<proteinExistence type="inferred from homology"/>
<reference key="1">
    <citation type="journal article" date="2006" name="J. Bacteriol.">
        <title>Chromosome rearrangement and diversification of Francisella tularensis revealed by the type B (OSU18) genome sequence.</title>
        <authorList>
            <person name="Petrosino J.F."/>
            <person name="Xiang Q."/>
            <person name="Karpathy S.E."/>
            <person name="Jiang H."/>
            <person name="Yerrapragada S."/>
            <person name="Liu Y."/>
            <person name="Gioia J."/>
            <person name="Hemphill L."/>
            <person name="Gonzalez A."/>
            <person name="Raghavan T.M."/>
            <person name="Uzman A."/>
            <person name="Fox G.E."/>
            <person name="Highlander S."/>
            <person name="Reichard M."/>
            <person name="Morton R.J."/>
            <person name="Clinkenbeard K.D."/>
            <person name="Weinstock G.M."/>
        </authorList>
    </citation>
    <scope>NUCLEOTIDE SEQUENCE [LARGE SCALE GENOMIC DNA]</scope>
    <source>
        <strain>OSU18</strain>
    </source>
</reference>
<protein>
    <recommendedName>
        <fullName evidence="1">Transcription elongation factor GreA</fullName>
    </recommendedName>
    <alternativeName>
        <fullName evidence="1">Transcript cleavage factor GreA</fullName>
    </alternativeName>
</protein>
<keyword id="KW-0238">DNA-binding</keyword>
<keyword id="KW-0804">Transcription</keyword>
<keyword id="KW-0805">Transcription regulation</keyword>
<organism>
    <name type="scientific">Francisella tularensis subsp. holarctica (strain OSU18)</name>
    <dbReference type="NCBI Taxonomy" id="393011"/>
    <lineage>
        <taxon>Bacteria</taxon>
        <taxon>Pseudomonadati</taxon>
        <taxon>Pseudomonadota</taxon>
        <taxon>Gammaproteobacteria</taxon>
        <taxon>Thiotrichales</taxon>
        <taxon>Francisellaceae</taxon>
        <taxon>Francisella</taxon>
    </lineage>
</organism>
<accession>Q0BKZ4</accession>
<name>GREA_FRATO</name>
<gene>
    <name evidence="1" type="primary">greA</name>
    <name type="ordered locus">FTH_1428</name>
</gene>
<sequence length="160" mass="17703">MANDRVPMTPAGEQALRAELDKLKKIERPAIIEAIAEARDHGDLKENAEYHAARERQGIIEGRIKDIESKLSNAQVIDVTKIQANGMVIFGATVTIMNVDTEEETTYKIVGEDEADIDNQKISVVAPLARALIKKEEGDEITLDTPKGKVTYEIVAVEYK</sequence>
<comment type="function">
    <text evidence="1">Necessary for efficient RNA polymerase transcription elongation past template-encoded arresting sites. The arresting sites in DNA have the property of trapping a certain fraction of elongating RNA polymerases that pass through, resulting in locked ternary complexes. Cleavage of the nascent transcript by cleavage factors such as GreA or GreB allows the resumption of elongation from the new 3'terminus. GreA releases sequences of 2 to 3 nucleotides.</text>
</comment>
<comment type="similarity">
    <text evidence="1">Belongs to the GreA/GreB family.</text>
</comment>
<feature type="chain" id="PRO_1000202857" description="Transcription elongation factor GreA">
    <location>
        <begin position="1"/>
        <end position="160"/>
    </location>
</feature>
<evidence type="ECO:0000255" key="1">
    <source>
        <dbReference type="HAMAP-Rule" id="MF_00105"/>
    </source>
</evidence>
<dbReference type="EMBL" id="CP000437">
    <property type="protein sequence ID" value="ABI83240.1"/>
    <property type="molecule type" value="Genomic_DNA"/>
</dbReference>
<dbReference type="RefSeq" id="WP_003016773.1">
    <property type="nucleotide sequence ID" value="NC_017463.1"/>
</dbReference>
<dbReference type="SMR" id="Q0BKZ4"/>
<dbReference type="KEGG" id="fth:FTH_1428"/>
<dbReference type="GO" id="GO:0003677">
    <property type="term" value="F:DNA binding"/>
    <property type="evidence" value="ECO:0007669"/>
    <property type="project" value="UniProtKB-UniRule"/>
</dbReference>
<dbReference type="GO" id="GO:0070063">
    <property type="term" value="F:RNA polymerase binding"/>
    <property type="evidence" value="ECO:0007669"/>
    <property type="project" value="InterPro"/>
</dbReference>
<dbReference type="GO" id="GO:0006354">
    <property type="term" value="P:DNA-templated transcription elongation"/>
    <property type="evidence" value="ECO:0007669"/>
    <property type="project" value="TreeGrafter"/>
</dbReference>
<dbReference type="GO" id="GO:0032784">
    <property type="term" value="P:regulation of DNA-templated transcription elongation"/>
    <property type="evidence" value="ECO:0007669"/>
    <property type="project" value="UniProtKB-UniRule"/>
</dbReference>
<dbReference type="FunFam" id="1.10.287.180:FF:000001">
    <property type="entry name" value="Transcription elongation factor GreA"/>
    <property type="match status" value="1"/>
</dbReference>
<dbReference type="FunFam" id="3.10.50.30:FF:000001">
    <property type="entry name" value="Transcription elongation factor GreA"/>
    <property type="match status" value="1"/>
</dbReference>
<dbReference type="Gene3D" id="3.10.50.30">
    <property type="entry name" value="Transcription elongation factor, GreA/GreB, C-terminal domain"/>
    <property type="match status" value="1"/>
</dbReference>
<dbReference type="Gene3D" id="1.10.287.180">
    <property type="entry name" value="Transcription elongation factor, GreA/GreB, N-terminal domain"/>
    <property type="match status" value="1"/>
</dbReference>
<dbReference type="HAMAP" id="MF_00105">
    <property type="entry name" value="GreA_GreB"/>
    <property type="match status" value="1"/>
</dbReference>
<dbReference type="InterPro" id="IPR036953">
    <property type="entry name" value="GreA/GreB_C_sf"/>
</dbReference>
<dbReference type="InterPro" id="IPR018151">
    <property type="entry name" value="TF_GreA/GreB_CS"/>
</dbReference>
<dbReference type="InterPro" id="IPR006359">
    <property type="entry name" value="Tscrpt_elong_fac_GreA"/>
</dbReference>
<dbReference type="InterPro" id="IPR028624">
    <property type="entry name" value="Tscrpt_elong_fac_GreA/B"/>
</dbReference>
<dbReference type="InterPro" id="IPR001437">
    <property type="entry name" value="Tscrpt_elong_fac_GreA/B_C"/>
</dbReference>
<dbReference type="InterPro" id="IPR023459">
    <property type="entry name" value="Tscrpt_elong_fac_GreA/B_fam"/>
</dbReference>
<dbReference type="InterPro" id="IPR022691">
    <property type="entry name" value="Tscrpt_elong_fac_GreA/B_N"/>
</dbReference>
<dbReference type="InterPro" id="IPR036805">
    <property type="entry name" value="Tscrpt_elong_fac_GreA/B_N_sf"/>
</dbReference>
<dbReference type="NCBIfam" id="TIGR01462">
    <property type="entry name" value="greA"/>
    <property type="match status" value="1"/>
</dbReference>
<dbReference type="NCBIfam" id="NF001261">
    <property type="entry name" value="PRK00226.1-2"/>
    <property type="match status" value="1"/>
</dbReference>
<dbReference type="NCBIfam" id="NF001263">
    <property type="entry name" value="PRK00226.1-4"/>
    <property type="match status" value="1"/>
</dbReference>
<dbReference type="NCBIfam" id="NF001264">
    <property type="entry name" value="PRK00226.1-5"/>
    <property type="match status" value="1"/>
</dbReference>
<dbReference type="PANTHER" id="PTHR30437">
    <property type="entry name" value="TRANSCRIPTION ELONGATION FACTOR GREA"/>
    <property type="match status" value="1"/>
</dbReference>
<dbReference type="PANTHER" id="PTHR30437:SF4">
    <property type="entry name" value="TRANSCRIPTION ELONGATION FACTOR GREA"/>
    <property type="match status" value="1"/>
</dbReference>
<dbReference type="Pfam" id="PF01272">
    <property type="entry name" value="GreA_GreB"/>
    <property type="match status" value="1"/>
</dbReference>
<dbReference type="Pfam" id="PF03449">
    <property type="entry name" value="GreA_GreB_N"/>
    <property type="match status" value="1"/>
</dbReference>
<dbReference type="PIRSF" id="PIRSF006092">
    <property type="entry name" value="GreA_GreB"/>
    <property type="match status" value="1"/>
</dbReference>
<dbReference type="SUPFAM" id="SSF54534">
    <property type="entry name" value="FKBP-like"/>
    <property type="match status" value="1"/>
</dbReference>
<dbReference type="SUPFAM" id="SSF46557">
    <property type="entry name" value="GreA transcript cleavage protein, N-terminal domain"/>
    <property type="match status" value="1"/>
</dbReference>
<dbReference type="PROSITE" id="PS00829">
    <property type="entry name" value="GREAB_1"/>
    <property type="match status" value="1"/>
</dbReference>